<organism>
    <name type="scientific">Clostridium botulinum (strain Langeland / NCTC 10281 / Type F)</name>
    <dbReference type="NCBI Taxonomy" id="441772"/>
    <lineage>
        <taxon>Bacteria</taxon>
        <taxon>Bacillati</taxon>
        <taxon>Bacillota</taxon>
        <taxon>Clostridia</taxon>
        <taxon>Eubacteriales</taxon>
        <taxon>Clostridiaceae</taxon>
        <taxon>Clostridium</taxon>
    </lineage>
</organism>
<dbReference type="EMBL" id="CP000728">
    <property type="protein sequence ID" value="ABS41569.1"/>
    <property type="molecule type" value="Genomic_DNA"/>
</dbReference>
<dbReference type="RefSeq" id="WP_003385813.1">
    <property type="nucleotide sequence ID" value="NC_009699.1"/>
</dbReference>
<dbReference type="SMR" id="A7GGF0"/>
<dbReference type="KEGG" id="cbf:CLI_2626"/>
<dbReference type="HOGENOM" id="CLU_162466_0_0_9"/>
<dbReference type="Proteomes" id="UP000002410">
    <property type="component" value="Chromosome"/>
</dbReference>
<dbReference type="HAMAP" id="MF_01507">
    <property type="entry name" value="UPF0297"/>
    <property type="match status" value="1"/>
</dbReference>
<dbReference type="InterPro" id="IPR009309">
    <property type="entry name" value="IreB"/>
</dbReference>
<dbReference type="NCBIfam" id="NF003997">
    <property type="entry name" value="PRK05473.1"/>
    <property type="match status" value="1"/>
</dbReference>
<dbReference type="PANTHER" id="PTHR40067">
    <property type="entry name" value="UPF0297 PROTEIN YRZL"/>
    <property type="match status" value="1"/>
</dbReference>
<dbReference type="PANTHER" id="PTHR40067:SF1">
    <property type="entry name" value="UPF0297 PROTEIN YRZL"/>
    <property type="match status" value="1"/>
</dbReference>
<dbReference type="Pfam" id="PF06135">
    <property type="entry name" value="IreB"/>
    <property type="match status" value="1"/>
</dbReference>
<dbReference type="PIRSF" id="PIRSF037258">
    <property type="entry name" value="DUF965_bac"/>
    <property type="match status" value="1"/>
</dbReference>
<feature type="chain" id="PRO_0000315250" description="UPF0297 protein CLI_2626">
    <location>
        <begin position="1"/>
        <end position="83"/>
    </location>
</feature>
<evidence type="ECO:0000255" key="1">
    <source>
        <dbReference type="HAMAP-Rule" id="MF_01507"/>
    </source>
</evidence>
<protein>
    <recommendedName>
        <fullName evidence="1">UPF0297 protein CLI_2626</fullName>
    </recommendedName>
</protein>
<proteinExistence type="inferred from homology"/>
<name>Y2626_CLOBL</name>
<gene>
    <name type="ordered locus">CLI_2626</name>
</gene>
<comment type="similarity">
    <text evidence="1">Belongs to the UPF0297 family.</text>
</comment>
<accession>A7GGF0</accession>
<sequence length="83" mass="9411">MSGDKTIQFDPVENKKTLTKEILTKVYNSLLEKGYNPVNQLVGYLISGDPTYITNYNGARSLVIKLERDEILEEVIKSYLGIN</sequence>
<reference key="1">
    <citation type="submission" date="2007-06" db="EMBL/GenBank/DDBJ databases">
        <authorList>
            <person name="Brinkac L.M."/>
            <person name="Daugherty S."/>
            <person name="Dodson R.J."/>
            <person name="Madupu R."/>
            <person name="Brown J.L."/>
            <person name="Bruce D."/>
            <person name="Detter C."/>
            <person name="Munk C."/>
            <person name="Smith L.A."/>
            <person name="Smith T.J."/>
            <person name="White O."/>
            <person name="Brettin T.S."/>
        </authorList>
    </citation>
    <scope>NUCLEOTIDE SEQUENCE [LARGE SCALE GENOMIC DNA]</scope>
    <source>
        <strain>Langeland / NCTC 10281 / Type F</strain>
    </source>
</reference>